<proteinExistence type="inferred from homology"/>
<protein>
    <recommendedName>
        <fullName evidence="1">Undecaprenyl-diphosphatase</fullName>
        <ecNumber evidence="1">3.6.1.27</ecNumber>
    </recommendedName>
    <alternativeName>
        <fullName evidence="1">Bacitracin resistance protein</fullName>
    </alternativeName>
    <alternativeName>
        <fullName evidence="1">Undecaprenyl pyrophosphate phosphatase</fullName>
    </alternativeName>
</protein>
<sequence length="276" mass="29785">MSWWQVISLAVVQGLTEFLPVSSSGHLAVVSRVFFSDDAGASFTAVTQLGTEAAVLVYFARDIVRILRAWFDGLVVKSHRNADYRLGWYVIIGTIPICVLGLLFKDEIRSGVRNLWVVATALVVFSGVIALAEYLGRQSRHVEQLTWRDGLVVGVAQTLALVPGVSRSGSTISAGLFLGLDRELAARFGFLLAIPAVFASGLFSLPDAFHPVTEGMSATGPQLLVATLIAFVVGLAAVSWFLRFLLRHSMYWFVGYRVVVGVVVLILLATGTVAAT</sequence>
<gene>
    <name evidence="1" type="primary">uppP</name>
    <name type="ordered locus">MUL_2366</name>
</gene>
<feature type="chain" id="PRO_0000290733" description="Undecaprenyl-diphosphatase">
    <location>
        <begin position="1"/>
        <end position="276"/>
    </location>
</feature>
<feature type="transmembrane region" description="Helical" evidence="1">
    <location>
        <begin position="84"/>
        <end position="104"/>
    </location>
</feature>
<feature type="transmembrane region" description="Helical" evidence="1">
    <location>
        <begin position="115"/>
        <end position="135"/>
    </location>
</feature>
<feature type="transmembrane region" description="Helical" evidence="1">
    <location>
        <begin position="188"/>
        <end position="208"/>
    </location>
</feature>
<feature type="transmembrane region" description="Helical" evidence="1">
    <location>
        <begin position="222"/>
        <end position="242"/>
    </location>
</feature>
<feature type="transmembrane region" description="Helical" evidence="1">
    <location>
        <begin position="250"/>
        <end position="270"/>
    </location>
</feature>
<organism>
    <name type="scientific">Mycobacterium ulcerans (strain Agy99)</name>
    <dbReference type="NCBI Taxonomy" id="362242"/>
    <lineage>
        <taxon>Bacteria</taxon>
        <taxon>Bacillati</taxon>
        <taxon>Actinomycetota</taxon>
        <taxon>Actinomycetes</taxon>
        <taxon>Mycobacteriales</taxon>
        <taxon>Mycobacteriaceae</taxon>
        <taxon>Mycobacterium</taxon>
        <taxon>Mycobacterium ulcerans group</taxon>
    </lineage>
</organism>
<dbReference type="EC" id="3.6.1.27" evidence="1"/>
<dbReference type="EMBL" id="CP000325">
    <property type="protein sequence ID" value="ABL04730.1"/>
    <property type="molecule type" value="Genomic_DNA"/>
</dbReference>
<dbReference type="RefSeq" id="WP_011740346.1">
    <property type="nucleotide sequence ID" value="NC_008611.1"/>
</dbReference>
<dbReference type="SMR" id="A0PQW1"/>
<dbReference type="KEGG" id="mul:MUL_2366"/>
<dbReference type="eggNOG" id="COG1968">
    <property type="taxonomic scope" value="Bacteria"/>
</dbReference>
<dbReference type="HOGENOM" id="CLU_060296_1_0_11"/>
<dbReference type="Proteomes" id="UP000000765">
    <property type="component" value="Chromosome"/>
</dbReference>
<dbReference type="GO" id="GO:0005886">
    <property type="term" value="C:plasma membrane"/>
    <property type="evidence" value="ECO:0007669"/>
    <property type="project" value="UniProtKB-SubCell"/>
</dbReference>
<dbReference type="GO" id="GO:0050380">
    <property type="term" value="F:undecaprenyl-diphosphatase activity"/>
    <property type="evidence" value="ECO:0007669"/>
    <property type="project" value="UniProtKB-UniRule"/>
</dbReference>
<dbReference type="GO" id="GO:0071555">
    <property type="term" value="P:cell wall organization"/>
    <property type="evidence" value="ECO:0007669"/>
    <property type="project" value="UniProtKB-KW"/>
</dbReference>
<dbReference type="GO" id="GO:0009252">
    <property type="term" value="P:peptidoglycan biosynthetic process"/>
    <property type="evidence" value="ECO:0007669"/>
    <property type="project" value="UniProtKB-KW"/>
</dbReference>
<dbReference type="GO" id="GO:0008360">
    <property type="term" value="P:regulation of cell shape"/>
    <property type="evidence" value="ECO:0007669"/>
    <property type="project" value="UniProtKB-KW"/>
</dbReference>
<dbReference type="GO" id="GO:0046677">
    <property type="term" value="P:response to antibiotic"/>
    <property type="evidence" value="ECO:0007669"/>
    <property type="project" value="UniProtKB-UniRule"/>
</dbReference>
<dbReference type="HAMAP" id="MF_01006">
    <property type="entry name" value="Undec_diphosphatase"/>
    <property type="match status" value="1"/>
</dbReference>
<dbReference type="InterPro" id="IPR003824">
    <property type="entry name" value="UppP"/>
</dbReference>
<dbReference type="NCBIfam" id="NF001392">
    <property type="entry name" value="PRK00281.2-1"/>
    <property type="match status" value="1"/>
</dbReference>
<dbReference type="NCBIfam" id="TIGR00753">
    <property type="entry name" value="undec_PP_bacA"/>
    <property type="match status" value="1"/>
</dbReference>
<dbReference type="PANTHER" id="PTHR30622">
    <property type="entry name" value="UNDECAPRENYL-DIPHOSPHATASE"/>
    <property type="match status" value="1"/>
</dbReference>
<dbReference type="PANTHER" id="PTHR30622:SF4">
    <property type="entry name" value="UNDECAPRENYL-DIPHOSPHATASE"/>
    <property type="match status" value="1"/>
</dbReference>
<dbReference type="Pfam" id="PF02673">
    <property type="entry name" value="BacA"/>
    <property type="match status" value="1"/>
</dbReference>
<keyword id="KW-0046">Antibiotic resistance</keyword>
<keyword id="KW-1003">Cell membrane</keyword>
<keyword id="KW-0133">Cell shape</keyword>
<keyword id="KW-0961">Cell wall biogenesis/degradation</keyword>
<keyword id="KW-0378">Hydrolase</keyword>
<keyword id="KW-0472">Membrane</keyword>
<keyword id="KW-0573">Peptidoglycan synthesis</keyword>
<keyword id="KW-0812">Transmembrane</keyword>
<keyword id="KW-1133">Transmembrane helix</keyword>
<comment type="function">
    <text evidence="1">Catalyzes the dephosphorylation of undecaprenyl diphosphate (UPP). Confers resistance to bacitracin.</text>
</comment>
<comment type="catalytic activity">
    <reaction evidence="1">
        <text>di-trans,octa-cis-undecaprenyl diphosphate + H2O = di-trans,octa-cis-undecaprenyl phosphate + phosphate + H(+)</text>
        <dbReference type="Rhea" id="RHEA:28094"/>
        <dbReference type="ChEBI" id="CHEBI:15377"/>
        <dbReference type="ChEBI" id="CHEBI:15378"/>
        <dbReference type="ChEBI" id="CHEBI:43474"/>
        <dbReference type="ChEBI" id="CHEBI:58405"/>
        <dbReference type="ChEBI" id="CHEBI:60392"/>
        <dbReference type="EC" id="3.6.1.27"/>
    </reaction>
</comment>
<comment type="subcellular location">
    <subcellularLocation>
        <location evidence="1">Cell membrane</location>
        <topology evidence="1">Multi-pass membrane protein</topology>
    </subcellularLocation>
</comment>
<comment type="miscellaneous">
    <text>Bacitracin is thought to be involved in the inhibition of peptidoglycan synthesis by sequestering undecaprenyl diphosphate, thereby reducing the pool of lipid carrier available.</text>
</comment>
<comment type="similarity">
    <text evidence="1">Belongs to the UppP family.</text>
</comment>
<name>UPPP_MYCUA</name>
<accession>A0PQW1</accession>
<reference key="1">
    <citation type="journal article" date="2007" name="Genome Res.">
        <title>Reductive evolution and niche adaptation inferred from the genome of Mycobacterium ulcerans, the causative agent of Buruli ulcer.</title>
        <authorList>
            <person name="Stinear T.P."/>
            <person name="Seemann T."/>
            <person name="Pidot S."/>
            <person name="Frigui W."/>
            <person name="Reysset G."/>
            <person name="Garnier T."/>
            <person name="Meurice G."/>
            <person name="Simon D."/>
            <person name="Bouchier C."/>
            <person name="Ma L."/>
            <person name="Tichit M."/>
            <person name="Porter J.L."/>
            <person name="Ryan J."/>
            <person name="Johnson P.D.R."/>
            <person name="Davies J.K."/>
            <person name="Jenkin G.A."/>
            <person name="Small P.L.C."/>
            <person name="Jones L.M."/>
            <person name="Tekaia F."/>
            <person name="Laval F."/>
            <person name="Daffe M."/>
            <person name="Parkhill J."/>
            <person name="Cole S.T."/>
        </authorList>
    </citation>
    <scope>NUCLEOTIDE SEQUENCE [LARGE SCALE GENOMIC DNA]</scope>
    <source>
        <strain>Agy99</strain>
    </source>
</reference>
<evidence type="ECO:0000255" key="1">
    <source>
        <dbReference type="HAMAP-Rule" id="MF_01006"/>
    </source>
</evidence>